<organism>
    <name type="scientific">Saccharomyces cerevisiae (strain ATCC 204508 / S288c)</name>
    <name type="common">Baker's yeast</name>
    <dbReference type="NCBI Taxonomy" id="559292"/>
    <lineage>
        <taxon>Eukaryota</taxon>
        <taxon>Fungi</taxon>
        <taxon>Dikarya</taxon>
        <taxon>Ascomycota</taxon>
        <taxon>Saccharomycotina</taxon>
        <taxon>Saccharomycetes</taxon>
        <taxon>Saccharomycetales</taxon>
        <taxon>Saccharomycetaceae</taxon>
        <taxon>Saccharomyces</taxon>
    </lineage>
</organism>
<evidence type="ECO:0000255" key="1"/>
<evidence type="ECO:0000255" key="2">
    <source>
        <dbReference type="PROSITE-ProRule" id="PRU01058"/>
    </source>
</evidence>
<evidence type="ECO:0000256" key="3">
    <source>
        <dbReference type="SAM" id="MobiDB-lite"/>
    </source>
</evidence>
<evidence type="ECO:0000269" key="4">
    <source>
    </source>
</evidence>
<evidence type="ECO:0000269" key="5">
    <source>
    </source>
</evidence>
<evidence type="ECO:0007744" key="6">
    <source>
    </source>
</evidence>
<evidence type="ECO:0007744" key="7">
    <source>
    </source>
</evidence>
<evidence type="ECO:0007829" key="8">
    <source>
        <dbReference type="PDB" id="7UUI"/>
    </source>
</evidence>
<dbReference type="EMBL" id="Z71668">
    <property type="protein sequence ID" value="CAA96334.1"/>
    <property type="molecule type" value="Genomic_DNA"/>
</dbReference>
<dbReference type="EMBL" id="BK006947">
    <property type="protein sequence ID" value="DAA10594.1"/>
    <property type="molecule type" value="Genomic_DNA"/>
</dbReference>
<dbReference type="PIR" id="S63384">
    <property type="entry name" value="S63384"/>
</dbReference>
<dbReference type="RefSeq" id="NP_014451.1">
    <property type="nucleotide sequence ID" value="NM_001183230.1"/>
</dbReference>
<dbReference type="PDB" id="3JCT">
    <property type="method" value="EM"/>
    <property type="resolution" value="3.08 A"/>
    <property type="chains" value="m=1-486"/>
</dbReference>
<dbReference type="PDB" id="6FT6">
    <property type="method" value="EM"/>
    <property type="resolution" value="3.90 A"/>
    <property type="chains" value="m=1-486"/>
</dbReference>
<dbReference type="PDB" id="6M62">
    <property type="method" value="EM"/>
    <property type="resolution" value="3.20 A"/>
    <property type="chains" value="m=1-486"/>
</dbReference>
<dbReference type="PDB" id="6N8J">
    <property type="method" value="EM"/>
    <property type="resolution" value="3.50 A"/>
    <property type="chains" value="m=1-486"/>
</dbReference>
<dbReference type="PDB" id="6YLG">
    <property type="method" value="EM"/>
    <property type="resolution" value="3.00 A"/>
    <property type="chains" value="m=1-486"/>
</dbReference>
<dbReference type="PDB" id="6YLH">
    <property type="method" value="EM"/>
    <property type="resolution" value="3.10 A"/>
    <property type="chains" value="m=1-486"/>
</dbReference>
<dbReference type="PDB" id="7BT6">
    <property type="method" value="EM"/>
    <property type="resolution" value="3.12 A"/>
    <property type="chains" value="m=1-486"/>
</dbReference>
<dbReference type="PDB" id="7BTB">
    <property type="method" value="EM"/>
    <property type="resolution" value="3.22 A"/>
    <property type="chains" value="m=1-486"/>
</dbReference>
<dbReference type="PDB" id="7OF1">
    <property type="method" value="EM"/>
    <property type="resolution" value="3.10 A"/>
    <property type="chains" value="m=1-486"/>
</dbReference>
<dbReference type="PDB" id="7OH3">
    <property type="method" value="EM"/>
    <property type="resolution" value="3.40 A"/>
    <property type="chains" value="m=1-486"/>
</dbReference>
<dbReference type="PDB" id="7OHQ">
    <property type="method" value="EM"/>
    <property type="resolution" value="3.10 A"/>
    <property type="chains" value="m=1-486"/>
</dbReference>
<dbReference type="PDB" id="7OHT">
    <property type="method" value="EM"/>
    <property type="resolution" value="4.70 A"/>
    <property type="chains" value="m=1-486"/>
</dbReference>
<dbReference type="PDB" id="7U0H">
    <property type="method" value="EM"/>
    <property type="resolution" value="2.76 A"/>
    <property type="chains" value="m=156-164"/>
</dbReference>
<dbReference type="PDB" id="7UG6">
    <property type="method" value="EM"/>
    <property type="resolution" value="2.90 A"/>
    <property type="chains" value="m=1-486"/>
</dbReference>
<dbReference type="PDB" id="7UOO">
    <property type="method" value="EM"/>
    <property type="resolution" value="2.34 A"/>
    <property type="chains" value="m=1-486"/>
</dbReference>
<dbReference type="PDB" id="7UQB">
    <property type="method" value="EM"/>
    <property type="resolution" value="2.43 A"/>
    <property type="chains" value="m=1-486"/>
</dbReference>
<dbReference type="PDB" id="7UQZ">
    <property type="method" value="EM"/>
    <property type="resolution" value="2.44 A"/>
    <property type="chains" value="m=1-472"/>
</dbReference>
<dbReference type="PDB" id="7UUI">
    <property type="method" value="EM"/>
    <property type="resolution" value="2.90 A"/>
    <property type="chains" value="m=1-486"/>
</dbReference>
<dbReference type="PDB" id="7V08">
    <property type="method" value="EM"/>
    <property type="resolution" value="2.36 A"/>
    <property type="chains" value="m=1-486"/>
</dbReference>
<dbReference type="PDB" id="8HFR">
    <property type="method" value="EM"/>
    <property type="resolution" value="2.64 A"/>
    <property type="chains" value="v9=1-486"/>
</dbReference>
<dbReference type="PDBsum" id="3JCT"/>
<dbReference type="PDBsum" id="6FT6"/>
<dbReference type="PDBsum" id="6M62"/>
<dbReference type="PDBsum" id="6N8J"/>
<dbReference type="PDBsum" id="6YLG"/>
<dbReference type="PDBsum" id="6YLH"/>
<dbReference type="PDBsum" id="7BT6"/>
<dbReference type="PDBsum" id="7BTB"/>
<dbReference type="PDBsum" id="7OF1"/>
<dbReference type="PDBsum" id="7OH3"/>
<dbReference type="PDBsum" id="7OHQ"/>
<dbReference type="PDBsum" id="7OHT"/>
<dbReference type="PDBsum" id="7U0H"/>
<dbReference type="PDBsum" id="7UG6"/>
<dbReference type="PDBsum" id="7UOO"/>
<dbReference type="PDBsum" id="7UQB"/>
<dbReference type="PDBsum" id="7UQZ"/>
<dbReference type="PDBsum" id="7UUI"/>
<dbReference type="PDBsum" id="7V08"/>
<dbReference type="PDBsum" id="8HFR"/>
<dbReference type="EMDB" id="EMD-0369"/>
<dbReference type="EMDB" id="EMD-10838"/>
<dbReference type="EMDB" id="EMD-10839"/>
<dbReference type="EMDB" id="EMD-12866"/>
<dbReference type="EMDB" id="EMD-12892"/>
<dbReference type="EMDB" id="EMD-12905"/>
<dbReference type="EMDB" id="EMD-12908"/>
<dbReference type="EMDB" id="EMD-26259"/>
<dbReference type="EMDB" id="EMD-26485"/>
<dbReference type="EMDB" id="EMD-26651"/>
<dbReference type="EMDB" id="EMD-26686"/>
<dbReference type="EMDB" id="EMD-26703"/>
<dbReference type="EMDB" id="EMD-26799"/>
<dbReference type="EMDB" id="EMD-26941"/>
<dbReference type="EMDB" id="EMD-30108"/>
<dbReference type="EMDB" id="EMD-30170"/>
<dbReference type="EMDB" id="EMD-30174"/>
<dbReference type="EMDB" id="EMD-34725"/>
<dbReference type="EMDB" id="EMD-4302"/>
<dbReference type="SMR" id="P53742"/>
<dbReference type="BioGRID" id="35878">
    <property type="interactions" value="480"/>
</dbReference>
<dbReference type="DIP" id="DIP-976N"/>
<dbReference type="FunCoup" id="P53742">
    <property type="interactions" value="1073"/>
</dbReference>
<dbReference type="IntAct" id="P53742">
    <property type="interactions" value="111"/>
</dbReference>
<dbReference type="MINT" id="P53742"/>
<dbReference type="STRING" id="4932.YNR053C"/>
<dbReference type="iPTMnet" id="P53742"/>
<dbReference type="PaxDb" id="4932-YNR053C"/>
<dbReference type="PeptideAtlas" id="P53742"/>
<dbReference type="EnsemblFungi" id="YNR053C_mRNA">
    <property type="protein sequence ID" value="YNR053C"/>
    <property type="gene ID" value="YNR053C"/>
</dbReference>
<dbReference type="GeneID" id="855789"/>
<dbReference type="KEGG" id="sce:YNR053C"/>
<dbReference type="AGR" id="SGD:S000005336"/>
<dbReference type="SGD" id="S000005336">
    <property type="gene designation" value="NOG2"/>
</dbReference>
<dbReference type="VEuPathDB" id="FungiDB:YNR053C"/>
<dbReference type="eggNOG" id="KOG2423">
    <property type="taxonomic scope" value="Eukaryota"/>
</dbReference>
<dbReference type="GeneTree" id="ENSGT00810000125524"/>
<dbReference type="HOGENOM" id="CLU_011106_4_0_1"/>
<dbReference type="InParanoid" id="P53742"/>
<dbReference type="OMA" id="RTQGFNH"/>
<dbReference type="OrthoDB" id="444945at2759"/>
<dbReference type="BioCyc" id="YEAST:G3O-33359-MONOMER"/>
<dbReference type="BioGRID-ORCS" id="855789">
    <property type="hits" value="0 hits in 10 CRISPR screens"/>
</dbReference>
<dbReference type="PRO" id="PR:P53742"/>
<dbReference type="Proteomes" id="UP000002311">
    <property type="component" value="Chromosome XIV"/>
</dbReference>
<dbReference type="RNAct" id="P53742">
    <property type="molecule type" value="protein"/>
</dbReference>
<dbReference type="GO" id="GO:0005730">
    <property type="term" value="C:nucleolus"/>
    <property type="evidence" value="ECO:0000314"/>
    <property type="project" value="SGD"/>
</dbReference>
<dbReference type="GO" id="GO:0005654">
    <property type="term" value="C:nucleoplasm"/>
    <property type="evidence" value="ECO:0000314"/>
    <property type="project" value="SGD"/>
</dbReference>
<dbReference type="GO" id="GO:0005634">
    <property type="term" value="C:nucleus"/>
    <property type="evidence" value="ECO:0000314"/>
    <property type="project" value="SGD"/>
</dbReference>
<dbReference type="GO" id="GO:0030687">
    <property type="term" value="C:preribosome, large subunit precursor"/>
    <property type="evidence" value="ECO:0000314"/>
    <property type="project" value="SGD"/>
</dbReference>
<dbReference type="GO" id="GO:0005525">
    <property type="term" value="F:GTP binding"/>
    <property type="evidence" value="ECO:0007669"/>
    <property type="project" value="UniProtKB-KW"/>
</dbReference>
<dbReference type="GO" id="GO:0003924">
    <property type="term" value="F:GTPase activity"/>
    <property type="evidence" value="ECO:0000250"/>
    <property type="project" value="SGD"/>
</dbReference>
<dbReference type="GO" id="GO:0070180">
    <property type="term" value="F:large ribosomal subunit rRNA binding"/>
    <property type="evidence" value="ECO:0000314"/>
    <property type="project" value="SGD"/>
</dbReference>
<dbReference type="GO" id="GO:2000200">
    <property type="term" value="P:regulation of ribosomal subunit export from nucleus"/>
    <property type="evidence" value="ECO:0000315"/>
    <property type="project" value="SGD"/>
</dbReference>
<dbReference type="GO" id="GO:0000055">
    <property type="term" value="P:ribosomal large subunit export from nucleus"/>
    <property type="evidence" value="ECO:0000315"/>
    <property type="project" value="SGD"/>
</dbReference>
<dbReference type="CDD" id="cd01858">
    <property type="entry name" value="NGP_1"/>
    <property type="match status" value="1"/>
</dbReference>
<dbReference type="FunFam" id="3.40.50.300:FF:000559">
    <property type="entry name" value="Nuclear/nucleolar GTPase 2"/>
    <property type="match status" value="1"/>
</dbReference>
<dbReference type="FunFam" id="1.10.1580.10:FF:000005">
    <property type="entry name" value="Nucleolar GTP-binding protein 2"/>
    <property type="match status" value="1"/>
</dbReference>
<dbReference type="Gene3D" id="1.10.1580.10">
    <property type="match status" value="1"/>
</dbReference>
<dbReference type="Gene3D" id="3.40.50.300">
    <property type="entry name" value="P-loop containing nucleotide triphosphate hydrolases"/>
    <property type="match status" value="1"/>
</dbReference>
<dbReference type="InterPro" id="IPR030378">
    <property type="entry name" value="G_CP_dom"/>
</dbReference>
<dbReference type="InterPro" id="IPR024929">
    <property type="entry name" value="GNL2_CP_dom"/>
</dbReference>
<dbReference type="InterPro" id="IPR006073">
    <property type="entry name" value="GTP-bd"/>
</dbReference>
<dbReference type="InterPro" id="IPR023179">
    <property type="entry name" value="GTP-bd_ortho_bundle_sf"/>
</dbReference>
<dbReference type="InterPro" id="IPR012971">
    <property type="entry name" value="NOG2_N_dom"/>
</dbReference>
<dbReference type="InterPro" id="IPR027417">
    <property type="entry name" value="P-loop_NTPase"/>
</dbReference>
<dbReference type="InterPro" id="IPR050755">
    <property type="entry name" value="TRAFAC_YlqF/YawG_RiboMat"/>
</dbReference>
<dbReference type="PANTHER" id="PTHR11089">
    <property type="entry name" value="GTP-BINDING PROTEIN-RELATED"/>
    <property type="match status" value="1"/>
</dbReference>
<dbReference type="PANTHER" id="PTHR11089:SF9">
    <property type="entry name" value="NUCLEOLAR GTP-BINDING PROTEIN 2"/>
    <property type="match status" value="1"/>
</dbReference>
<dbReference type="Pfam" id="PF01926">
    <property type="entry name" value="MMR_HSR1"/>
    <property type="match status" value="1"/>
</dbReference>
<dbReference type="Pfam" id="PF08153">
    <property type="entry name" value="NGP1NT"/>
    <property type="match status" value="1"/>
</dbReference>
<dbReference type="PRINTS" id="PR00326">
    <property type="entry name" value="GTP1OBG"/>
</dbReference>
<dbReference type="SUPFAM" id="SSF52540">
    <property type="entry name" value="P-loop containing nucleoside triphosphate hydrolases"/>
    <property type="match status" value="1"/>
</dbReference>
<dbReference type="PROSITE" id="PS51721">
    <property type="entry name" value="G_CP"/>
    <property type="match status" value="1"/>
</dbReference>
<keyword id="KW-0002">3D-structure</keyword>
<keyword id="KW-0342">GTP-binding</keyword>
<keyword id="KW-0547">Nucleotide-binding</keyword>
<keyword id="KW-0539">Nucleus</keyword>
<keyword id="KW-0597">Phosphoprotein</keyword>
<keyword id="KW-1185">Reference proteome</keyword>
<keyword id="KW-0690">Ribosome biogenesis</keyword>
<sequence length="486" mass="55489">MGTGKKEKSRRIREGDTKDGNLRVKGENFYRDSKRVKFLNMYTSGKEIRNKKGNLIRAASFQDSTIPDARVQPDRRWFGNTRVISQDALQHFRSALGETQKDTYQVLLRRNKLPMSLLEEKDADESPKARILDTESYADAFGPKAQRKRPRLAASNLEDLVKATNEDITKYEEKQVLDATLGLMGNQEDKENGWTSAAKEAIFSKGQSKRIWNELYKVIDSSDVVIHVLDARDPLGTRCKSVEEYMKKETPHKHLIYVLNKCDLVPTWVAAAWVKHLSKERPTLAFHASITNSFGKGSLIQLLRQFSQLHTDRKQISVGFIGYPNTGKSSIINTLRKKKVCQVAPIPGETKVWQYITLMKRIFLIDCPGIVPPSSKDSEEDILFRGVVRVEHVTHPEQYIPGVLKRCQVKHLERTYEISGWKDATEFIEILARKQGRLLKGGEPDESGVSKQILNDFNRGKIPWFVLPPEKEGEEKPKKKEVEKTA</sequence>
<gene>
    <name type="primary">NOG2</name>
    <name type="ordered locus">YNR053C</name>
    <name type="ORF">N3484</name>
</gene>
<name>NOG2_YEAST</name>
<feature type="chain" id="PRO_0000215817" description="Nucleolar GTP-binding protein 2">
    <location>
        <begin position="1"/>
        <end position="486"/>
    </location>
</feature>
<feature type="domain" description="CP-type G" evidence="2">
    <location>
        <begin position="212"/>
        <end position="373"/>
    </location>
</feature>
<feature type="region of interest" description="Disordered" evidence="3">
    <location>
        <begin position="1"/>
        <end position="20"/>
    </location>
</feature>
<feature type="binding site" evidence="1">
    <location>
        <begin position="322"/>
        <end position="329"/>
    </location>
    <ligand>
        <name>GTP</name>
        <dbReference type="ChEBI" id="CHEBI:37565"/>
    </ligand>
</feature>
<feature type="binding site" evidence="1">
    <location>
        <begin position="366"/>
        <end position="370"/>
    </location>
    <ligand>
        <name>GTP</name>
        <dbReference type="ChEBI" id="CHEBI:37565"/>
    </ligand>
</feature>
<feature type="modified residue" description="Phosphoserine" evidence="7">
    <location>
        <position position="60"/>
    </location>
</feature>
<feature type="modified residue" description="Phosphoserine" evidence="6">
    <location>
        <position position="85"/>
    </location>
</feature>
<feature type="modified residue" description="Phosphoserine" evidence="6 7">
    <location>
        <position position="155"/>
    </location>
</feature>
<feature type="helix" evidence="8">
    <location>
        <begin position="3"/>
        <end position="5"/>
    </location>
</feature>
<feature type="helix" evidence="8">
    <location>
        <begin position="7"/>
        <end position="13"/>
    </location>
</feature>
<feature type="helix" evidence="8">
    <location>
        <begin position="33"/>
        <end position="39"/>
    </location>
</feature>
<feature type="helix" evidence="8">
    <location>
        <begin position="40"/>
        <end position="43"/>
    </location>
</feature>
<feature type="helix" evidence="8">
    <location>
        <begin position="75"/>
        <end position="78"/>
    </location>
</feature>
<feature type="helix" evidence="8">
    <location>
        <begin position="86"/>
        <end position="101"/>
    </location>
</feature>
<feature type="helix" evidence="8">
    <location>
        <begin position="110"/>
        <end position="112"/>
    </location>
</feature>
<feature type="helix" evidence="8">
    <location>
        <begin position="115"/>
        <end position="117"/>
    </location>
</feature>
<feature type="helix" evidence="8">
    <location>
        <begin position="131"/>
        <end position="134"/>
    </location>
</feature>
<feature type="helix" evidence="8">
    <location>
        <begin position="137"/>
        <end position="140"/>
    </location>
</feature>
<feature type="helix" evidence="8">
    <location>
        <begin position="157"/>
        <end position="179"/>
    </location>
</feature>
<feature type="turn" evidence="8">
    <location>
        <begin position="180"/>
        <end position="185"/>
    </location>
</feature>
<feature type="helix" evidence="8">
    <location>
        <begin position="186"/>
        <end position="191"/>
    </location>
</feature>
<feature type="helix" evidence="8">
    <location>
        <begin position="201"/>
        <end position="204"/>
    </location>
</feature>
<feature type="helix" evidence="8">
    <location>
        <begin position="209"/>
        <end position="221"/>
    </location>
</feature>
<feature type="strand" evidence="8">
    <location>
        <begin position="223"/>
        <end position="233"/>
    </location>
</feature>
<feature type="helix" evidence="8">
    <location>
        <begin position="234"/>
        <end position="237"/>
    </location>
</feature>
<feature type="helix" evidence="8">
    <location>
        <begin position="240"/>
        <end position="249"/>
    </location>
</feature>
<feature type="strand" evidence="8">
    <location>
        <begin position="253"/>
        <end position="260"/>
    </location>
</feature>
<feature type="turn" evidence="8">
    <location>
        <begin position="262"/>
        <end position="264"/>
    </location>
</feature>
<feature type="helix" evidence="8">
    <location>
        <begin position="267"/>
        <end position="277"/>
    </location>
</feature>
<feature type="turn" evidence="8">
    <location>
        <begin position="278"/>
        <end position="280"/>
    </location>
</feature>
<feature type="strand" evidence="8">
    <location>
        <begin position="283"/>
        <end position="285"/>
    </location>
</feature>
<feature type="strand" evidence="8">
    <location>
        <begin position="290"/>
        <end position="292"/>
    </location>
</feature>
<feature type="helix" evidence="8">
    <location>
        <begin position="296"/>
        <end position="309"/>
    </location>
</feature>
<feature type="strand" evidence="8">
    <location>
        <begin position="312"/>
        <end position="314"/>
    </location>
</feature>
<feature type="strand" evidence="8">
    <location>
        <begin position="316"/>
        <end position="323"/>
    </location>
</feature>
<feature type="helix" evidence="8">
    <location>
        <begin position="328"/>
        <end position="336"/>
    </location>
</feature>
<feature type="strand" evidence="8">
    <location>
        <begin position="354"/>
        <end position="366"/>
    </location>
</feature>
<feature type="strand" evidence="8">
    <location>
        <begin position="375"/>
        <end position="377"/>
    </location>
</feature>
<feature type="helix" evidence="8">
    <location>
        <begin position="379"/>
        <end position="384"/>
    </location>
</feature>
<feature type="helix" evidence="8">
    <location>
        <begin position="390"/>
        <end position="392"/>
    </location>
</feature>
<feature type="helix" evidence="8">
    <location>
        <begin position="397"/>
        <end position="399"/>
    </location>
</feature>
<feature type="helix" evidence="8">
    <location>
        <begin position="400"/>
        <end position="404"/>
    </location>
</feature>
<feature type="helix" evidence="8">
    <location>
        <begin position="409"/>
        <end position="416"/>
    </location>
</feature>
<feature type="helix" evidence="8">
    <location>
        <begin position="424"/>
        <end position="435"/>
    </location>
</feature>
<feature type="helix" evidence="8">
    <location>
        <begin position="446"/>
        <end position="458"/>
    </location>
</feature>
<proteinExistence type="evidence at protein level"/>
<comment type="function">
    <text evidence="4">GTPase that associates with pre-60S ribosomal subunits in the nucleolus and is required for their nuclear export and maturation.</text>
</comment>
<comment type="interaction">
    <interactant intactId="EBI-28532">
        <id>P53742</id>
    </interactant>
    <interactant intactId="EBI-28098">
        <id>Q04660</id>
        <label>ERB1</label>
    </interactant>
    <organismsDiffer>false</organismsDiffer>
    <experiments>3</experiments>
</comment>
<comment type="interaction">
    <interactant intactId="EBI-28532">
        <id>P53742</id>
    </interactant>
    <interactant intactId="EBI-10944">
        <id>Q12176</id>
        <label>MAK21</label>
    </interactant>
    <organismsDiffer>false</organismsDiffer>
    <experiments>3</experiments>
</comment>
<comment type="interaction">
    <interactant intactId="EBI-28532">
        <id>P53742</id>
    </interactant>
    <interactant intactId="EBI-9046">
        <id>Q12522</id>
        <label>TIF6</label>
    </interactant>
    <organismsDiffer>false</organismsDiffer>
    <experiments>5</experiments>
</comment>
<comment type="subcellular location">
    <subcellularLocation>
        <location evidence="4">Nucleus</location>
        <location evidence="4">Nucleolus</location>
    </subcellularLocation>
</comment>
<comment type="miscellaneous">
    <text evidence="5">Present with 67700 molecules/cell in log phase SD medium.</text>
</comment>
<comment type="similarity">
    <text evidence="2">Belongs to the TRAFAC class YlqF/YawG GTPase family. NOG2 subfamily.</text>
</comment>
<reference key="1">
    <citation type="journal article" date="1997" name="Nature">
        <title>The nucleotide sequence of Saccharomyces cerevisiae chromosome XIV and its evolutionary implications.</title>
        <authorList>
            <person name="Philippsen P."/>
            <person name="Kleine K."/>
            <person name="Poehlmann R."/>
            <person name="Duesterhoeft A."/>
            <person name="Hamberg K."/>
            <person name="Hegemann J.H."/>
            <person name="Obermaier B."/>
            <person name="Urrestarazu L.A."/>
            <person name="Aert R."/>
            <person name="Albermann K."/>
            <person name="Altmann R."/>
            <person name="Andre B."/>
            <person name="Baladron V."/>
            <person name="Ballesta J.P.G."/>
            <person name="Becam A.-M."/>
            <person name="Beinhauer J.D."/>
            <person name="Boskovic J."/>
            <person name="Buitrago M.J."/>
            <person name="Bussereau F."/>
            <person name="Coster F."/>
            <person name="Crouzet M."/>
            <person name="D'Angelo M."/>
            <person name="Dal Pero F."/>
            <person name="De Antoni A."/>
            <person name="del Rey F."/>
            <person name="Doignon F."/>
            <person name="Domdey H."/>
            <person name="Dubois E."/>
            <person name="Fiedler T.A."/>
            <person name="Fleig U."/>
            <person name="Floeth M."/>
            <person name="Fritz C."/>
            <person name="Gaillardin C."/>
            <person name="Garcia-Cantalejo J.M."/>
            <person name="Glansdorff N."/>
            <person name="Goffeau A."/>
            <person name="Gueldener U."/>
            <person name="Herbert C.J."/>
            <person name="Heumann K."/>
            <person name="Heuss-Neitzel D."/>
            <person name="Hilbert H."/>
            <person name="Hinni K."/>
            <person name="Iraqui Houssaini I."/>
            <person name="Jacquet M."/>
            <person name="Jimenez A."/>
            <person name="Jonniaux J.-L."/>
            <person name="Karpfinger-Hartl L."/>
            <person name="Lanfranchi G."/>
            <person name="Lepingle A."/>
            <person name="Levesque H."/>
            <person name="Lyck R."/>
            <person name="Maftahi M."/>
            <person name="Mallet L."/>
            <person name="Maurer C.T.C."/>
            <person name="Messenguy F."/>
            <person name="Mewes H.-W."/>
            <person name="Moestl D."/>
            <person name="Nasr F."/>
            <person name="Nicaud J.-M."/>
            <person name="Niedenthal R.K."/>
            <person name="Pandolfo D."/>
            <person name="Pierard A."/>
            <person name="Piravandi E."/>
            <person name="Planta R.J."/>
            <person name="Pohl T.M."/>
            <person name="Purnelle B."/>
            <person name="Rebischung C."/>
            <person name="Remacha M.A."/>
            <person name="Revuelta J.L."/>
            <person name="Rinke M."/>
            <person name="Saiz J.E."/>
            <person name="Sartorello F."/>
            <person name="Scherens B."/>
            <person name="Sen-Gupta M."/>
            <person name="Soler-Mira A."/>
            <person name="Urbanus J.H.M."/>
            <person name="Valle G."/>
            <person name="Van Dyck L."/>
            <person name="Verhasselt P."/>
            <person name="Vierendeels F."/>
            <person name="Vissers S."/>
            <person name="Voet M."/>
            <person name="Volckaert G."/>
            <person name="Wach A."/>
            <person name="Wambutt R."/>
            <person name="Wedler H."/>
            <person name="Zollner A."/>
            <person name="Hani J."/>
        </authorList>
    </citation>
    <scope>NUCLEOTIDE SEQUENCE [LARGE SCALE GENOMIC DNA]</scope>
    <source>
        <strain>ATCC 204508 / S288c</strain>
    </source>
</reference>
<reference key="2">
    <citation type="journal article" date="2014" name="G3 (Bethesda)">
        <title>The reference genome sequence of Saccharomyces cerevisiae: Then and now.</title>
        <authorList>
            <person name="Engel S.R."/>
            <person name="Dietrich F.S."/>
            <person name="Fisk D.G."/>
            <person name="Binkley G."/>
            <person name="Balakrishnan R."/>
            <person name="Costanzo M.C."/>
            <person name="Dwight S.S."/>
            <person name="Hitz B.C."/>
            <person name="Karra K."/>
            <person name="Nash R.S."/>
            <person name="Weng S."/>
            <person name="Wong E.D."/>
            <person name="Lloyd P."/>
            <person name="Skrzypek M.S."/>
            <person name="Miyasato S.R."/>
            <person name="Simison M."/>
            <person name="Cherry J.M."/>
        </authorList>
    </citation>
    <scope>GENOME REANNOTATION</scope>
    <source>
        <strain>ATCC 204508 / S288c</strain>
    </source>
</reference>
<reference key="3">
    <citation type="journal article" date="2001" name="EMBO J.">
        <title>Nog2p, a putative GTPase associated with pre-60S subunits and required for late 60S maturation steps.</title>
        <authorList>
            <person name="Saveanu C."/>
            <person name="Bienvenu D."/>
            <person name="Namane A."/>
            <person name="Gleizes P.-E."/>
            <person name="Gas N."/>
            <person name="Jacquier A."/>
            <person name="Fromont-Racine M."/>
        </authorList>
    </citation>
    <scope>FUNCTION</scope>
    <scope>SUBCELLULAR LOCATION</scope>
</reference>
<reference key="4">
    <citation type="journal article" date="2003" name="Nature">
        <title>Global analysis of protein expression in yeast.</title>
        <authorList>
            <person name="Ghaemmaghami S."/>
            <person name="Huh W.-K."/>
            <person name="Bower K."/>
            <person name="Howson R.W."/>
            <person name="Belle A."/>
            <person name="Dephoure N."/>
            <person name="O'Shea E.K."/>
            <person name="Weissman J.S."/>
        </authorList>
    </citation>
    <scope>LEVEL OF PROTEIN EXPRESSION [LARGE SCALE ANALYSIS]</scope>
</reference>
<reference key="5">
    <citation type="journal article" date="2008" name="Mol. Cell. Proteomics">
        <title>A multidimensional chromatography technology for in-depth phosphoproteome analysis.</title>
        <authorList>
            <person name="Albuquerque C.P."/>
            <person name="Smolka M.B."/>
            <person name="Payne S.H."/>
            <person name="Bafna V."/>
            <person name="Eng J."/>
            <person name="Zhou H."/>
        </authorList>
    </citation>
    <scope>PHOSPHORYLATION [LARGE SCALE ANALYSIS] AT SER-85 AND SER-155</scope>
    <scope>IDENTIFICATION BY MASS SPECTROMETRY [LARGE SCALE ANALYSIS]</scope>
</reference>
<reference key="6">
    <citation type="journal article" date="2009" name="Science">
        <title>Global analysis of Cdk1 substrate phosphorylation sites provides insights into evolution.</title>
        <authorList>
            <person name="Holt L.J."/>
            <person name="Tuch B.B."/>
            <person name="Villen J."/>
            <person name="Johnson A.D."/>
            <person name="Gygi S.P."/>
            <person name="Morgan D.O."/>
        </authorList>
    </citation>
    <scope>PHOSPHORYLATION [LARGE SCALE ANALYSIS] AT SER-60 AND SER-155</scope>
    <scope>IDENTIFICATION BY MASS SPECTROMETRY [LARGE SCALE ANALYSIS]</scope>
</reference>
<protein>
    <recommendedName>
        <fullName>Nucleolar GTP-binding protein 2</fullName>
    </recommendedName>
</protein>
<accession>P53742</accession>
<accession>D6W1M8</accession>